<protein>
    <recommendedName>
        <fullName evidence="1">Phosphatidylethanolamine N-methyltransferase A</fullName>
        <shortName evidence="1">PEAMT</shortName>
        <shortName evidence="1">PEMT</shortName>
        <ecNumber evidence="1">2.1.1.17</ecNumber>
        <ecNumber evidence="1">2.1.1.71</ecNumber>
    </recommendedName>
    <alternativeName>
        <fullName evidence="1">Phospholipid methyltransferase A</fullName>
        <shortName evidence="1">PLMT</shortName>
    </alternativeName>
</protein>
<feature type="chain" id="PRO_0000328081" description="Phosphatidylethanolamine N-methyltransferase A">
    <location>
        <begin position="1"/>
        <end position="213"/>
    </location>
</feature>
<feature type="topological domain" description="Lumenal" evidence="1">
    <location>
        <begin position="1"/>
        <end position="21"/>
    </location>
</feature>
<feature type="intramembrane region" description="Helical" evidence="1">
    <location>
        <begin position="22"/>
        <end position="42"/>
    </location>
</feature>
<feature type="topological domain" description="Lumenal" evidence="1">
    <location>
        <begin position="43"/>
        <end position="54"/>
    </location>
</feature>
<feature type="transmembrane region" description="Helical" evidence="1">
    <location>
        <begin position="55"/>
        <end position="75"/>
    </location>
</feature>
<feature type="topological domain" description="Cytoplasmic" evidence="1">
    <location>
        <begin position="76"/>
        <end position="102"/>
    </location>
</feature>
<feature type="transmembrane region" description="Helical" evidence="1">
    <location>
        <begin position="103"/>
        <end position="123"/>
    </location>
</feature>
<feature type="topological domain" description="Lumenal" evidence="1">
    <location>
        <begin position="124"/>
        <end position="166"/>
    </location>
</feature>
<feature type="transmembrane region" description="Helical" evidence="1">
    <location>
        <begin position="167"/>
        <end position="187"/>
    </location>
</feature>
<feature type="topological domain" description="Cytoplasmic" evidence="1">
    <location>
        <begin position="188"/>
        <end position="213"/>
    </location>
</feature>
<feature type="binding site" evidence="1">
    <location>
        <begin position="107"/>
        <end position="109"/>
    </location>
    <ligand>
        <name>S-adenosyl-L-methionine</name>
        <dbReference type="ChEBI" id="CHEBI:59789"/>
    </ligand>
</feature>
<feature type="binding site" evidence="1">
    <location>
        <begin position="189"/>
        <end position="190"/>
    </location>
    <ligand>
        <name>S-adenosyl-L-methionine</name>
        <dbReference type="ChEBI" id="CHEBI:59789"/>
    </ligand>
</feature>
<dbReference type="EC" id="2.1.1.17" evidence="1"/>
<dbReference type="EC" id="2.1.1.71" evidence="1"/>
<dbReference type="EMBL" id="AAFI02000047">
    <property type="protein sequence ID" value="EAL66123.1"/>
    <property type="molecule type" value="Genomic_DNA"/>
</dbReference>
<dbReference type="RefSeq" id="XP_640104.1">
    <property type="nucleotide sequence ID" value="XM_635012.1"/>
</dbReference>
<dbReference type="FunCoup" id="Q54SD5">
    <property type="interactions" value="1"/>
</dbReference>
<dbReference type="STRING" id="44689.Q54SD5"/>
<dbReference type="PaxDb" id="44689-DDB0267053"/>
<dbReference type="EnsemblProtists" id="EAL66123">
    <property type="protein sequence ID" value="EAL66123"/>
    <property type="gene ID" value="DDB_G0282527"/>
</dbReference>
<dbReference type="GeneID" id="8623635"/>
<dbReference type="KEGG" id="ddi:DDB_G0282527"/>
<dbReference type="dictyBase" id="DDB_G0282527">
    <property type="gene designation" value="pemtA"/>
</dbReference>
<dbReference type="VEuPathDB" id="AmoebaDB:DDB_G0282527"/>
<dbReference type="eggNOG" id="KOG4142">
    <property type="taxonomic scope" value="Eukaryota"/>
</dbReference>
<dbReference type="HOGENOM" id="CLU_086119_0_1_1"/>
<dbReference type="InParanoid" id="Q54SD5"/>
<dbReference type="OMA" id="PTFWNIA"/>
<dbReference type="PhylomeDB" id="Q54SD5"/>
<dbReference type="Reactome" id="R-DDI-1483191">
    <property type="pathway name" value="Synthesis of PC"/>
</dbReference>
<dbReference type="UniPathway" id="UPA00753"/>
<dbReference type="PRO" id="PR:Q54SD5"/>
<dbReference type="Proteomes" id="UP000002195">
    <property type="component" value="Chromosome 3"/>
</dbReference>
<dbReference type="GO" id="GO:0005789">
    <property type="term" value="C:endoplasmic reticulum membrane"/>
    <property type="evidence" value="ECO:0007669"/>
    <property type="project" value="UniProtKB-SubCell"/>
</dbReference>
<dbReference type="GO" id="GO:0031966">
    <property type="term" value="C:mitochondrial membrane"/>
    <property type="evidence" value="ECO:0007669"/>
    <property type="project" value="UniProtKB-SubCell"/>
</dbReference>
<dbReference type="GO" id="GO:0000773">
    <property type="term" value="F:phosphatidyl-N-methylethanolamine N-methyltransferase activity"/>
    <property type="evidence" value="ECO:0007669"/>
    <property type="project" value="UniProtKB-UniRule"/>
</dbReference>
<dbReference type="GO" id="GO:0004608">
    <property type="term" value="F:phosphatidylethanolamine N-methyltransferase activity"/>
    <property type="evidence" value="ECO:0007669"/>
    <property type="project" value="UniProtKB-UniRule"/>
</dbReference>
<dbReference type="GO" id="GO:0032259">
    <property type="term" value="P:methylation"/>
    <property type="evidence" value="ECO:0007669"/>
    <property type="project" value="UniProtKB-KW"/>
</dbReference>
<dbReference type="GO" id="GO:0006656">
    <property type="term" value="P:phosphatidylcholine biosynthetic process"/>
    <property type="evidence" value="ECO:0000318"/>
    <property type="project" value="GO_Central"/>
</dbReference>
<dbReference type="FunFam" id="1.20.120.1630:FF:000005">
    <property type="entry name" value="Phosphatidylethanolamine N-methyltransferase"/>
    <property type="match status" value="1"/>
</dbReference>
<dbReference type="Gene3D" id="1.20.120.1630">
    <property type="match status" value="1"/>
</dbReference>
<dbReference type="HAMAP" id="MF_03216">
    <property type="entry name" value="PLMT"/>
    <property type="match status" value="1"/>
</dbReference>
<dbReference type="InterPro" id="IPR024960">
    <property type="entry name" value="PEMT/MFAP"/>
</dbReference>
<dbReference type="InterPro" id="IPR007318">
    <property type="entry name" value="Phopholipid_MeTrfase"/>
</dbReference>
<dbReference type="PANTHER" id="PTHR15458">
    <property type="entry name" value="PHOSPHATIDYLETHANOLAMINE N-METHYLTRANSFERASE"/>
    <property type="match status" value="1"/>
</dbReference>
<dbReference type="PANTHER" id="PTHR15458:SF5">
    <property type="entry name" value="PHOSPHATIDYLETHANOLAMINE N-METHYLTRANSFERASE"/>
    <property type="match status" value="1"/>
</dbReference>
<dbReference type="Pfam" id="PF04191">
    <property type="entry name" value="PEMT"/>
    <property type="match status" value="1"/>
</dbReference>
<dbReference type="PIRSF" id="PIRSF005444">
    <property type="entry name" value="PEMT"/>
    <property type="match status" value="1"/>
</dbReference>
<dbReference type="PROSITE" id="PS51599">
    <property type="entry name" value="SAM_PEMT_PEM2"/>
    <property type="match status" value="1"/>
</dbReference>
<accession>Q54SD5</accession>
<reference key="1">
    <citation type="journal article" date="2005" name="Nature">
        <title>The genome of the social amoeba Dictyostelium discoideum.</title>
        <authorList>
            <person name="Eichinger L."/>
            <person name="Pachebat J.A."/>
            <person name="Gloeckner G."/>
            <person name="Rajandream M.A."/>
            <person name="Sucgang R."/>
            <person name="Berriman M."/>
            <person name="Song J."/>
            <person name="Olsen R."/>
            <person name="Szafranski K."/>
            <person name="Xu Q."/>
            <person name="Tunggal B."/>
            <person name="Kummerfeld S."/>
            <person name="Madera M."/>
            <person name="Konfortov B.A."/>
            <person name="Rivero F."/>
            <person name="Bankier A.T."/>
            <person name="Lehmann R."/>
            <person name="Hamlin N."/>
            <person name="Davies R."/>
            <person name="Gaudet P."/>
            <person name="Fey P."/>
            <person name="Pilcher K."/>
            <person name="Chen G."/>
            <person name="Saunders D."/>
            <person name="Sodergren E.J."/>
            <person name="Davis P."/>
            <person name="Kerhornou A."/>
            <person name="Nie X."/>
            <person name="Hall N."/>
            <person name="Anjard C."/>
            <person name="Hemphill L."/>
            <person name="Bason N."/>
            <person name="Farbrother P."/>
            <person name="Desany B."/>
            <person name="Just E."/>
            <person name="Morio T."/>
            <person name="Rost R."/>
            <person name="Churcher C.M."/>
            <person name="Cooper J."/>
            <person name="Haydock S."/>
            <person name="van Driessche N."/>
            <person name="Cronin A."/>
            <person name="Goodhead I."/>
            <person name="Muzny D.M."/>
            <person name="Mourier T."/>
            <person name="Pain A."/>
            <person name="Lu M."/>
            <person name="Harper D."/>
            <person name="Lindsay R."/>
            <person name="Hauser H."/>
            <person name="James K.D."/>
            <person name="Quiles M."/>
            <person name="Madan Babu M."/>
            <person name="Saito T."/>
            <person name="Buchrieser C."/>
            <person name="Wardroper A."/>
            <person name="Felder M."/>
            <person name="Thangavelu M."/>
            <person name="Johnson D."/>
            <person name="Knights A."/>
            <person name="Loulseged H."/>
            <person name="Mungall K.L."/>
            <person name="Oliver K."/>
            <person name="Price C."/>
            <person name="Quail M.A."/>
            <person name="Urushihara H."/>
            <person name="Hernandez J."/>
            <person name="Rabbinowitsch E."/>
            <person name="Steffen D."/>
            <person name="Sanders M."/>
            <person name="Ma J."/>
            <person name="Kohara Y."/>
            <person name="Sharp S."/>
            <person name="Simmonds M.N."/>
            <person name="Spiegler S."/>
            <person name="Tivey A."/>
            <person name="Sugano S."/>
            <person name="White B."/>
            <person name="Walker D."/>
            <person name="Woodward J.R."/>
            <person name="Winckler T."/>
            <person name="Tanaka Y."/>
            <person name="Shaulsky G."/>
            <person name="Schleicher M."/>
            <person name="Weinstock G.M."/>
            <person name="Rosenthal A."/>
            <person name="Cox E.C."/>
            <person name="Chisholm R.L."/>
            <person name="Gibbs R.A."/>
            <person name="Loomis W.F."/>
            <person name="Platzer M."/>
            <person name="Kay R.R."/>
            <person name="Williams J.G."/>
            <person name="Dear P.H."/>
            <person name="Noegel A.A."/>
            <person name="Barrell B.G."/>
            <person name="Kuspa A."/>
        </authorList>
    </citation>
    <scope>NUCLEOTIDE SEQUENCE [LARGE SCALE GENOMIC DNA]</scope>
    <source>
        <strain>AX4</strain>
    </source>
</reference>
<proteinExistence type="inferred from homology"/>
<organism>
    <name type="scientific">Dictyostelium discoideum</name>
    <name type="common">Social amoeba</name>
    <dbReference type="NCBI Taxonomy" id="44689"/>
    <lineage>
        <taxon>Eukaryota</taxon>
        <taxon>Amoebozoa</taxon>
        <taxon>Evosea</taxon>
        <taxon>Eumycetozoa</taxon>
        <taxon>Dictyostelia</taxon>
        <taxon>Dictyosteliales</taxon>
        <taxon>Dictyosteliaceae</taxon>
        <taxon>Dictyostelium</taxon>
    </lineage>
</organism>
<comment type="function">
    <text evidence="1">Catalyzes the three sequential steps of the methylation pathway of phosphatidylcholine biosynthesis, the SAM-dependent methylation of phosphatidylethanolamine (PE) to phosphatidylmonomethylethanolamine (PMME), PMME to phosphatidyldimethylethanolamine (PDME), and PDME to phosphatidylcholine (PC).</text>
</comment>
<comment type="catalytic activity">
    <reaction evidence="1">
        <text>a 1,2-diacyl-sn-glycero-3-phospho-N-methylethanolamine + S-adenosyl-L-methionine = a 1,2-diacyl-sn-glycero-3-phospho-N,N-dimethylethanolamine + S-adenosyl-L-homocysteine + H(+)</text>
        <dbReference type="Rhea" id="RHEA:32735"/>
        <dbReference type="ChEBI" id="CHEBI:15378"/>
        <dbReference type="ChEBI" id="CHEBI:57856"/>
        <dbReference type="ChEBI" id="CHEBI:59789"/>
        <dbReference type="ChEBI" id="CHEBI:64572"/>
        <dbReference type="ChEBI" id="CHEBI:64573"/>
        <dbReference type="EC" id="2.1.1.71"/>
    </reaction>
</comment>
<comment type="catalytic activity">
    <reaction evidence="1">
        <text>a 1,2-diacyl-sn-glycero-3-phospho-N,N-dimethylethanolamine + S-adenosyl-L-methionine = a 1,2-diacyl-sn-glycero-3-phosphocholine + S-adenosyl-L-homocysteine + H(+)</text>
        <dbReference type="Rhea" id="RHEA:32739"/>
        <dbReference type="ChEBI" id="CHEBI:15378"/>
        <dbReference type="ChEBI" id="CHEBI:57643"/>
        <dbReference type="ChEBI" id="CHEBI:57856"/>
        <dbReference type="ChEBI" id="CHEBI:59789"/>
        <dbReference type="ChEBI" id="CHEBI:64572"/>
        <dbReference type="EC" id="2.1.1.71"/>
    </reaction>
</comment>
<comment type="catalytic activity">
    <reaction evidence="1">
        <text>a 1,2-diacyl-sn-glycero-3-phosphoethanolamine + S-adenosyl-L-methionine = a 1,2-diacyl-sn-glycero-3-phospho-N-methylethanolamine + S-adenosyl-L-homocysteine + H(+)</text>
        <dbReference type="Rhea" id="RHEA:11164"/>
        <dbReference type="ChEBI" id="CHEBI:15378"/>
        <dbReference type="ChEBI" id="CHEBI:57856"/>
        <dbReference type="ChEBI" id="CHEBI:59789"/>
        <dbReference type="ChEBI" id="CHEBI:64573"/>
        <dbReference type="ChEBI" id="CHEBI:64612"/>
        <dbReference type="EC" id="2.1.1.17"/>
    </reaction>
</comment>
<comment type="pathway">
    <text evidence="1">Phospholipid metabolism; phosphatidylcholine biosynthesis.</text>
</comment>
<comment type="subcellular location">
    <subcellularLocation>
        <location evidence="1">Endoplasmic reticulum membrane</location>
        <topology evidence="1">Multi-pass membrane protein</topology>
    </subcellularLocation>
    <subcellularLocation>
        <location evidence="1">Mitochondrion membrane</location>
        <topology evidence="1">Multi-pass membrane protein</topology>
    </subcellularLocation>
</comment>
<comment type="similarity">
    <text evidence="1">Belongs to the class VI-like SAM-binding methyltransferase superfamily. PEMT/PEM2 methyltransferase family.</text>
</comment>
<sequence length="213" mass="24515">MIVEHAIDYIDYLMNYVDFTEKYFLLTIACVVFNPTWWNITARMEYKTKFMTKICGSKENGCYLLAFLIFSLGILRDWLFSEALIRQPIFQEFDRFEVEVLSYILYGFGGILVLAAYLKLGITGTYLGDYFGILMKERVTGFPFNVMNNPMYNGSVMLFIAHALSYKSVAGLVLSFVVYVVYKFALIFEESFTNYIYSTAAANAAKKNKSKSK</sequence>
<name>PEMT1_DICDI</name>
<evidence type="ECO:0000255" key="1">
    <source>
        <dbReference type="HAMAP-Rule" id="MF_03216"/>
    </source>
</evidence>
<keyword id="KW-0256">Endoplasmic reticulum</keyword>
<keyword id="KW-0444">Lipid biosynthesis</keyword>
<keyword id="KW-0443">Lipid metabolism</keyword>
<keyword id="KW-0472">Membrane</keyword>
<keyword id="KW-0489">Methyltransferase</keyword>
<keyword id="KW-0496">Mitochondrion</keyword>
<keyword id="KW-0594">Phospholipid biosynthesis</keyword>
<keyword id="KW-1208">Phospholipid metabolism</keyword>
<keyword id="KW-1185">Reference proteome</keyword>
<keyword id="KW-0949">S-adenosyl-L-methionine</keyword>
<keyword id="KW-0808">Transferase</keyword>
<keyword id="KW-0812">Transmembrane</keyword>
<keyword id="KW-1133">Transmembrane helix</keyword>
<gene>
    <name type="primary">pemtA</name>
    <name type="ORF">DDB_G0282527</name>
</gene>